<protein>
    <recommendedName>
        <fullName>Follistatin</fullName>
        <shortName>FS</shortName>
    </recommendedName>
    <alternativeName>
        <fullName>Activin-binding protein</fullName>
    </alternativeName>
</protein>
<feature type="signal peptide" evidence="1">
    <location>
        <begin position="1"/>
        <end position="28"/>
    </location>
</feature>
<feature type="chain" id="PRO_0000010108" description="Follistatin">
    <location>
        <begin position="29"/>
        <end position="343"/>
    </location>
</feature>
<feature type="domain" description="TB" evidence="2">
    <location>
        <begin position="29"/>
        <end position="102"/>
    </location>
</feature>
<feature type="domain" description="Follistatin-like 1">
    <location>
        <begin position="93"/>
        <end position="116"/>
    </location>
</feature>
<feature type="domain" description="Kazal-like 1" evidence="3">
    <location>
        <begin position="99"/>
        <end position="165"/>
    </location>
</feature>
<feature type="domain" description="Follistatin-like 2">
    <location>
        <begin position="166"/>
        <end position="189"/>
    </location>
</feature>
<feature type="domain" description="Kazal-like 2" evidence="3">
    <location>
        <begin position="185"/>
        <end position="240"/>
    </location>
</feature>
<feature type="domain" description="Follistatin-like 3">
    <location>
        <begin position="243"/>
        <end position="267"/>
    </location>
</feature>
<feature type="domain" description="Kazal-like 3" evidence="3">
    <location>
        <begin position="263"/>
        <end position="317"/>
    </location>
</feature>
<feature type="region of interest" description="Disordered" evidence="4">
    <location>
        <begin position="315"/>
        <end position="343"/>
    </location>
</feature>
<feature type="compositionally biased region" description="Acidic residues" evidence="4">
    <location>
        <begin position="320"/>
        <end position="332"/>
    </location>
</feature>
<feature type="glycosylation site" description="N-linked (GlcNAc...) asparagine" evidence="1">
    <location>
        <position position="123"/>
    </location>
</feature>
<feature type="glycosylation site" description="N-linked (GlcNAc...) asparagine" evidence="1">
    <location>
        <position position="287"/>
    </location>
</feature>
<feature type="disulfide bond" evidence="2">
    <location>
        <begin position="31"/>
        <end position="54"/>
    </location>
</feature>
<feature type="disulfide bond" evidence="2">
    <location>
        <begin position="41"/>
        <end position="87"/>
    </location>
</feature>
<feature type="disulfide bond" evidence="2">
    <location>
        <begin position="55"/>
        <end position="90"/>
    </location>
</feature>
<feature type="disulfide bond" evidence="3">
    <location>
        <begin position="94"/>
        <end position="105"/>
    </location>
</feature>
<feature type="disulfide bond" evidence="3">
    <location>
        <begin position="99"/>
        <end position="115"/>
    </location>
</feature>
<feature type="disulfide bond" evidence="3">
    <location>
        <begin position="117"/>
        <end position="149"/>
    </location>
</feature>
<feature type="disulfide bond" evidence="3">
    <location>
        <begin position="121"/>
        <end position="142"/>
    </location>
</feature>
<feature type="disulfide bond" evidence="3">
    <location>
        <begin position="131"/>
        <end position="163"/>
    </location>
</feature>
<feature type="disulfide bond" evidence="3">
    <location>
        <begin position="191"/>
        <end position="224"/>
    </location>
</feature>
<feature type="disulfide bond" evidence="3">
    <location>
        <begin position="195"/>
        <end position="217"/>
    </location>
</feature>
<feature type="disulfide bond" evidence="3">
    <location>
        <begin position="206"/>
        <end position="238"/>
    </location>
</feature>
<feature type="disulfide bond" evidence="3">
    <location>
        <begin position="269"/>
        <end position="301"/>
    </location>
</feature>
<feature type="disulfide bond" evidence="3">
    <location>
        <begin position="273"/>
        <end position="294"/>
    </location>
</feature>
<feature type="disulfide bond" evidence="3">
    <location>
        <begin position="283"/>
        <end position="315"/>
    </location>
</feature>
<feature type="sequence conflict" description="In Ref. 2; no nucleotide entry." evidence="5" ref="2">
    <original>P</original>
    <variation>F</variation>
    <location>
        <position position="129"/>
    </location>
</feature>
<feature type="sequence conflict" description="In Ref. 3; AAA92005." evidence="5" ref="3">
    <original>T</original>
    <variation>S</variation>
    <location>
        <position position="177"/>
    </location>
</feature>
<feature type="sequence conflict" description="In Ref. 2; no nucleotide entry." evidence="5" ref="2">
    <original>T</original>
    <variation>L</variation>
    <location>
        <position position="183"/>
    </location>
</feature>
<feature type="sequence conflict" description="In Ref. 2; no nucleotide entry." evidence="5" ref="2">
    <original>E</original>
    <variation>G</variation>
    <location>
        <position position="202"/>
    </location>
</feature>
<feature type="sequence conflict" description="In Ref. 3; AAA92005." evidence="5" ref="3">
    <original>R</original>
    <variation>E</variation>
    <location>
        <position position="228"/>
    </location>
</feature>
<gene>
    <name type="primary">FST</name>
</gene>
<reference key="1">
    <citation type="journal article" date="1996" name="Development">
        <title>Interactions between rhombomeres modulate Krox-20 and follistatin expression in the chick embryo hindbrain.</title>
        <authorList>
            <person name="Graham A."/>
            <person name="Lumsden A."/>
        </authorList>
    </citation>
    <scope>NUCLEOTIDE SEQUENCE [MRNA]</scope>
    <source>
        <tissue>Embryo</tissue>
    </source>
</reference>
<reference key="2">
    <citation type="journal article" date="1995" name="Dev. Genet.">
        <title>Cloning, sequencing, and expressional analysis of the chick homologue of follistatin.</title>
        <authorList>
            <person name="Connolly D.J."/>
            <person name="Patel K."/>
            <person name="Seleiro E.A."/>
            <person name="Wilkinson D.G."/>
            <person name="Cooke J."/>
        </authorList>
    </citation>
    <scope>NUCLEOTIDE SEQUENCE [MRNA]</scope>
    <source>
        <tissue>Embryo</tissue>
    </source>
</reference>
<reference key="3">
    <citation type="journal article" date="1995" name="Neuron">
        <title>Activin A and follistatin expression in developing targets of ciliary ganglion neurons suggests a role in regulating neurotransmitter phenotype.</title>
        <authorList>
            <person name="Darland D.C."/>
            <person name="Link B.A."/>
            <person name="Nishi R."/>
        </authorList>
    </citation>
    <scope>NUCLEOTIDE SEQUENCE [MRNA] OF 177-250</scope>
    <source>
        <tissue>Embryonic ovary</tissue>
    </source>
</reference>
<name>FST_CHICK</name>
<sequence length="343" mass="38193">MLNQRIHPGMLVLLMFLYHFMEDHTAQAGNCWLRQARNGRCQVLYKTDLSKEECCKSGRLTTSWTEEDVNDNTLFKWMIFNGGAPNCIPCKETCENVDCGPGKKCKMNKKNKPRCVCAPDCSNITWKGPVCGLDGKTYRNECALLKARCKEQPELEVQYQGKCKKTCRDVLCPGSSTCVVDQTNNAYCVTCNRICPEPTSPEQYLCGNDGITYASACHLRKATCLLGRSIGLAYEGKCIKAKSCEDIQCSAGKKCLWDFKVGRGRCALCDELCPESKSDEAVCASDNTTYPSECAMKEAACSMGVLLEVKHSGSCNSINEDPEEEEEDEDQDYSFPISSILEW</sequence>
<organism>
    <name type="scientific">Gallus gallus</name>
    <name type="common">Chicken</name>
    <dbReference type="NCBI Taxonomy" id="9031"/>
    <lineage>
        <taxon>Eukaryota</taxon>
        <taxon>Metazoa</taxon>
        <taxon>Chordata</taxon>
        <taxon>Craniata</taxon>
        <taxon>Vertebrata</taxon>
        <taxon>Euteleostomi</taxon>
        <taxon>Archelosauria</taxon>
        <taxon>Archosauria</taxon>
        <taxon>Dinosauria</taxon>
        <taxon>Saurischia</taxon>
        <taxon>Theropoda</taxon>
        <taxon>Coelurosauria</taxon>
        <taxon>Aves</taxon>
        <taxon>Neognathae</taxon>
        <taxon>Galloanserae</taxon>
        <taxon>Galliformes</taxon>
        <taxon>Phasianidae</taxon>
        <taxon>Phasianinae</taxon>
        <taxon>Gallus</taxon>
    </lineage>
</organism>
<keyword id="KW-1015">Disulfide bond</keyword>
<keyword id="KW-0325">Glycoprotein</keyword>
<keyword id="KW-1185">Reference proteome</keyword>
<keyword id="KW-0677">Repeat</keyword>
<keyword id="KW-0964">Secreted</keyword>
<keyword id="KW-0732">Signal</keyword>
<comment type="function">
    <text>Binds directly to activin and functions as an activin antagonist. Inhibits activin A signaling in the iris and regulates somatostatin phenotype in ciliary ganglion neurons. Specific inhibitor of the biosynthesis and secretion of pituitary follicle stimulating hormone (FSH).</text>
</comment>
<comment type="subunit">
    <text evidence="5">Monomer.</text>
</comment>
<comment type="subcellular location">
    <subcellularLocation>
        <location>Secreted</location>
    </subcellularLocation>
</comment>
<comment type="tissue specificity">
    <text>Ciliary ganglion neurons. Levels are higher in the iris than the choroid.</text>
</comment>
<comment type="developmental stage">
    <text>Levels increase in the iris from embryonic day 9 (9 dpc) to 16 dpc in contrast to the choroid where it remains low relative to iris. During early hindbrain development strongly expressed in rhombomeres R2, R4, R5 and R6 but not in R3. Expression in R3 is seen at later stages and is dependent on neighboring interactions.</text>
</comment>
<evidence type="ECO:0000255" key="1"/>
<evidence type="ECO:0000255" key="2">
    <source>
        <dbReference type="PROSITE-ProRule" id="PRU00697"/>
    </source>
</evidence>
<evidence type="ECO:0000255" key="3">
    <source>
        <dbReference type="PROSITE-ProRule" id="PRU00798"/>
    </source>
</evidence>
<evidence type="ECO:0000256" key="4">
    <source>
        <dbReference type="SAM" id="MobiDB-lite"/>
    </source>
</evidence>
<evidence type="ECO:0000305" key="5"/>
<accession>Q90844</accession>
<accession>Q90680</accession>
<accession>Q9PS97</accession>
<proteinExistence type="evidence at transcript level"/>
<dbReference type="EMBL" id="X87609">
    <property type="protein sequence ID" value="CAA60915.1"/>
    <property type="molecule type" value="mRNA"/>
</dbReference>
<dbReference type="EMBL" id="U34589">
    <property type="protein sequence ID" value="AAA92005.1"/>
    <property type="molecule type" value="mRNA"/>
</dbReference>
<dbReference type="PIR" id="S55369">
    <property type="entry name" value="S55369"/>
</dbReference>
<dbReference type="RefSeq" id="NP_990531.1">
    <property type="nucleotide sequence ID" value="NM_205200.2"/>
</dbReference>
<dbReference type="SMR" id="Q90844"/>
<dbReference type="FunCoup" id="Q90844">
    <property type="interactions" value="34"/>
</dbReference>
<dbReference type="STRING" id="9031.ENSGALP00000068743"/>
<dbReference type="MEROPS" id="I01.966"/>
<dbReference type="GlyCosmos" id="Q90844">
    <property type="glycosylation" value="2 sites, No reported glycans"/>
</dbReference>
<dbReference type="GlyGen" id="Q90844">
    <property type="glycosylation" value="2 sites"/>
</dbReference>
<dbReference type="PaxDb" id="9031-ENSGALP00000023997"/>
<dbReference type="GeneID" id="396119"/>
<dbReference type="KEGG" id="gga:396119"/>
<dbReference type="CTD" id="10468"/>
<dbReference type="VEuPathDB" id="HostDB:geneid_396119"/>
<dbReference type="eggNOG" id="KOG3649">
    <property type="taxonomic scope" value="Eukaryota"/>
</dbReference>
<dbReference type="HOGENOM" id="CLU_050745_0_0_1"/>
<dbReference type="InParanoid" id="Q90844"/>
<dbReference type="OMA" id="DYKAYVH"/>
<dbReference type="OrthoDB" id="6614329at2759"/>
<dbReference type="PhylomeDB" id="Q90844"/>
<dbReference type="PRO" id="PR:Q90844"/>
<dbReference type="Proteomes" id="UP000000539">
    <property type="component" value="Unassembled WGS sequence"/>
</dbReference>
<dbReference type="GO" id="GO:0005615">
    <property type="term" value="C:extracellular space"/>
    <property type="evidence" value="ECO:0000314"/>
    <property type="project" value="AgBase"/>
</dbReference>
<dbReference type="GO" id="GO:0048185">
    <property type="term" value="F:activin binding"/>
    <property type="evidence" value="ECO:0000303"/>
    <property type="project" value="AgBase"/>
</dbReference>
<dbReference type="GO" id="GO:0005509">
    <property type="term" value="F:calcium ion binding"/>
    <property type="evidence" value="ECO:0000318"/>
    <property type="project" value="GO_Central"/>
</dbReference>
<dbReference type="GO" id="GO:0005518">
    <property type="term" value="F:collagen binding"/>
    <property type="evidence" value="ECO:0000318"/>
    <property type="project" value="GO_Central"/>
</dbReference>
<dbReference type="GO" id="GO:0050840">
    <property type="term" value="F:extracellular matrix binding"/>
    <property type="evidence" value="ECO:0000318"/>
    <property type="project" value="GO_Central"/>
</dbReference>
<dbReference type="GO" id="GO:0032926">
    <property type="term" value="P:negative regulation of activin receptor signaling pathway"/>
    <property type="evidence" value="ECO:0000315"/>
    <property type="project" value="AgBase"/>
</dbReference>
<dbReference type="GO" id="GO:1902870">
    <property type="term" value="P:negative regulation of amacrine cell differentiation"/>
    <property type="evidence" value="ECO:0000315"/>
    <property type="project" value="AgBase"/>
</dbReference>
<dbReference type="GO" id="GO:1902864">
    <property type="term" value="P:negative regulation of embryonic camera-type eye development"/>
    <property type="evidence" value="ECO:0000315"/>
    <property type="project" value="AgBase"/>
</dbReference>
<dbReference type="GO" id="GO:1902876">
    <property type="term" value="P:negative regulation of embryonic pattern specification"/>
    <property type="evidence" value="ECO:0000315"/>
    <property type="project" value="AgBase"/>
</dbReference>
<dbReference type="GO" id="GO:1902873">
    <property type="term" value="P:negative regulation of horizontal cell localization"/>
    <property type="evidence" value="ECO:0000315"/>
    <property type="project" value="AgBase"/>
</dbReference>
<dbReference type="GO" id="GO:0010977">
    <property type="term" value="P:negative regulation of neuron projection development"/>
    <property type="evidence" value="ECO:0000315"/>
    <property type="project" value="AgBase"/>
</dbReference>
<dbReference type="GO" id="GO:1902867">
    <property type="term" value="P:negative regulation of retina development in camera-type eye"/>
    <property type="evidence" value="ECO:0000315"/>
    <property type="project" value="AgBase"/>
</dbReference>
<dbReference type="GO" id="GO:0046670">
    <property type="term" value="P:positive regulation of retinal cell programmed cell death"/>
    <property type="evidence" value="ECO:0000315"/>
    <property type="project" value="AgBase"/>
</dbReference>
<dbReference type="CDD" id="cd00104">
    <property type="entry name" value="KAZAL_FS"/>
    <property type="match status" value="3"/>
</dbReference>
<dbReference type="FunFam" id="3.30.60.30:FF:000005">
    <property type="entry name" value="Follistatin a"/>
    <property type="match status" value="1"/>
</dbReference>
<dbReference type="FunFam" id="3.30.60.30:FF:000006">
    <property type="entry name" value="Follistatin a"/>
    <property type="match status" value="1"/>
</dbReference>
<dbReference type="FunFam" id="3.30.60.30:FF:000009">
    <property type="entry name" value="Follistatin a"/>
    <property type="match status" value="1"/>
</dbReference>
<dbReference type="FunFam" id="3.90.290.10:FF:000013">
    <property type="entry name" value="Follistatin a"/>
    <property type="match status" value="1"/>
</dbReference>
<dbReference type="Gene3D" id="3.30.60.30">
    <property type="match status" value="3"/>
</dbReference>
<dbReference type="Gene3D" id="3.90.290.10">
    <property type="entry name" value="TGF-beta binding (TB) domain"/>
    <property type="match status" value="1"/>
</dbReference>
<dbReference type="InterPro" id="IPR003645">
    <property type="entry name" value="Fol_N"/>
</dbReference>
<dbReference type="InterPro" id="IPR015369">
    <property type="entry name" value="Follistatin/Osteonectin_EGF"/>
</dbReference>
<dbReference type="InterPro" id="IPR002350">
    <property type="entry name" value="Kazal_dom"/>
</dbReference>
<dbReference type="InterPro" id="IPR036058">
    <property type="entry name" value="Kazal_dom_sf"/>
</dbReference>
<dbReference type="InterPro" id="IPR050653">
    <property type="entry name" value="Prot_Inhib_GrowthFact_Antg"/>
</dbReference>
<dbReference type="InterPro" id="IPR017878">
    <property type="entry name" value="TB_dom"/>
</dbReference>
<dbReference type="InterPro" id="IPR036773">
    <property type="entry name" value="TB_dom_sf"/>
</dbReference>
<dbReference type="PANTHER" id="PTHR10913:SF6">
    <property type="entry name" value="FOLLISTATIN"/>
    <property type="match status" value="1"/>
</dbReference>
<dbReference type="PANTHER" id="PTHR10913">
    <property type="entry name" value="FOLLISTATIN-RELATED"/>
    <property type="match status" value="1"/>
</dbReference>
<dbReference type="Pfam" id="PF09289">
    <property type="entry name" value="FOLN"/>
    <property type="match status" value="1"/>
</dbReference>
<dbReference type="Pfam" id="PF21333">
    <property type="entry name" value="FST_N"/>
    <property type="match status" value="1"/>
</dbReference>
<dbReference type="Pfam" id="PF07648">
    <property type="entry name" value="Kazal_2"/>
    <property type="match status" value="3"/>
</dbReference>
<dbReference type="SMART" id="SM00274">
    <property type="entry name" value="FOLN"/>
    <property type="match status" value="3"/>
</dbReference>
<dbReference type="SMART" id="SM00280">
    <property type="entry name" value="KAZAL"/>
    <property type="match status" value="3"/>
</dbReference>
<dbReference type="SUPFAM" id="SSF100895">
    <property type="entry name" value="Kazal-type serine protease inhibitors"/>
    <property type="match status" value="3"/>
</dbReference>
<dbReference type="PROSITE" id="PS51465">
    <property type="entry name" value="KAZAL_2"/>
    <property type="match status" value="3"/>
</dbReference>
<dbReference type="PROSITE" id="PS51364">
    <property type="entry name" value="TB"/>
    <property type="match status" value="1"/>
</dbReference>